<organism>
    <name type="scientific">Mycoplasma pneumoniae (strain ATCC 29342 / M129 / Subtype 1)</name>
    <name type="common">Mycoplasmoides pneumoniae</name>
    <dbReference type="NCBI Taxonomy" id="272634"/>
    <lineage>
        <taxon>Bacteria</taxon>
        <taxon>Bacillati</taxon>
        <taxon>Mycoplasmatota</taxon>
        <taxon>Mycoplasmoidales</taxon>
        <taxon>Mycoplasmoidaceae</taxon>
        <taxon>Mycoplasmoides</taxon>
    </lineage>
</organism>
<accession>P75431</accession>
<sequence>MFLTGFDAPTLNTLWVDKNLSEHTLIQAFSRTNRCFGETKKFGNIFSFRDIRENFDQALKMYADKRGLKDIKSNMVMREFEEVFEKFKDWTEKIKQKYPNPDEILNLEKEEKWDFSDLFGEFLGDYRTVKSYHEFDKDNPYLPSDEFNKYFAAFSQIQEEIRKEKAEKKALEVQEEDLSNEVRKEPQIFSWEYGEGIQANLDYIFHLIKDLYNCDNEQDRQKVLDKIKTAIRTNPEIQVNEDILNEFIEDLGKSFEKEKLEEVWKTEGKLRECLKDFCKKKEESNKKKIINDFLVKGVFLVEWVADKQLNTAKKKGEYSPSWSDTEKLIWKEKSTNLPTMTEKDEDGNFKWRKLITDISEAFKNHFERFIRFVEIR</sequence>
<proteinExistence type="uncertain"/>
<name>T1R1_MYCPN</name>
<dbReference type="EMBL" id="U00089">
    <property type="protein sequence ID" value="AAB96137.1"/>
    <property type="molecule type" value="Genomic_DNA"/>
</dbReference>
<dbReference type="PIR" id="S73815">
    <property type="entry name" value="S73815"/>
</dbReference>
<dbReference type="RefSeq" id="WP_010874703.1">
    <property type="nucleotide sequence ID" value="NZ_OU342337.1"/>
</dbReference>
<dbReference type="SMR" id="P75431"/>
<dbReference type="IntAct" id="P75431">
    <property type="interactions" value="1"/>
</dbReference>
<dbReference type="STRING" id="272634.MPN_347"/>
<dbReference type="EnsemblBacteria" id="AAB96137">
    <property type="protein sequence ID" value="AAB96137"/>
    <property type="gene ID" value="MPN_347"/>
</dbReference>
<dbReference type="KEGG" id="mpn:MPN_347"/>
<dbReference type="HOGENOM" id="CLU_735331_0_0_14"/>
<dbReference type="PRO" id="PR:P75431"/>
<dbReference type="Proteomes" id="UP000000808">
    <property type="component" value="Chromosome"/>
</dbReference>
<dbReference type="GO" id="GO:0009035">
    <property type="term" value="F:type I site-specific deoxyribonuclease activity"/>
    <property type="evidence" value="ECO:0007669"/>
    <property type="project" value="UniProtKB-EC"/>
</dbReference>
<dbReference type="GO" id="GO:0009307">
    <property type="term" value="P:DNA restriction-modification system"/>
    <property type="evidence" value="ECO:0007669"/>
    <property type="project" value="UniProtKB-KW"/>
</dbReference>
<dbReference type="CDD" id="cd18800">
    <property type="entry name" value="SF2_C_EcoR124I-like"/>
    <property type="match status" value="1"/>
</dbReference>
<dbReference type="Gene3D" id="1.20.58.910">
    <property type="match status" value="1"/>
</dbReference>
<dbReference type="Gene3D" id="3.40.50.300">
    <property type="entry name" value="P-loop containing nucleotide triphosphate hydrolases"/>
    <property type="match status" value="1"/>
</dbReference>
<dbReference type="InterPro" id="IPR055180">
    <property type="entry name" value="HsdR_RecA-like_helicase_dom_2"/>
</dbReference>
<dbReference type="InterPro" id="IPR027417">
    <property type="entry name" value="P-loop_NTPase"/>
</dbReference>
<dbReference type="InterPro" id="IPR051268">
    <property type="entry name" value="Type-I_R_enzyme_R_subunit"/>
</dbReference>
<dbReference type="InterPro" id="IPR022625">
    <property type="entry name" value="TypeI_RM_Rsu_C"/>
</dbReference>
<dbReference type="PANTHER" id="PTHR30195:SF16">
    <property type="entry name" value="TYPE I RESTRICTION ENZYME ENDONUCLEASE SUBUNIT"/>
    <property type="match status" value="1"/>
</dbReference>
<dbReference type="PANTHER" id="PTHR30195">
    <property type="entry name" value="TYPE I SITE-SPECIFIC DEOXYRIBONUCLEASE PROTEIN SUBUNIT M AND R"/>
    <property type="match status" value="1"/>
</dbReference>
<dbReference type="Pfam" id="PF12008">
    <property type="entry name" value="EcoR124_C"/>
    <property type="match status" value="1"/>
</dbReference>
<dbReference type="Pfam" id="PF22679">
    <property type="entry name" value="T1R_D3-like"/>
    <property type="match status" value="1"/>
</dbReference>
<keyword id="KW-1185">Reference proteome</keyword>
<keyword id="KW-0680">Restriction system</keyword>
<feature type="chain" id="PRO_0000077263" description="Putative type I restriction enzyme MpnIIP endonuclease subunit N-terminal part">
    <location>
        <begin position="1"/>
        <end position="376"/>
    </location>
</feature>
<evidence type="ECO:0000303" key="1">
    <source>
    </source>
</evidence>
<evidence type="ECO:0000303" key="2">
    <source>
    </source>
</evidence>
<evidence type="ECO:0000305" key="3">
    <source>
    </source>
</evidence>
<evidence type="ECO:0000305" key="4">
    <source>
    </source>
</evidence>
<reference key="1">
    <citation type="journal article" date="1996" name="Nucleic Acids Res.">
        <title>Complete sequence analysis of the genome of the bacterium Mycoplasma pneumoniae.</title>
        <authorList>
            <person name="Himmelreich R."/>
            <person name="Hilbert H."/>
            <person name="Plagens H."/>
            <person name="Pirkl E."/>
            <person name="Li B.-C."/>
            <person name="Herrmann R."/>
        </authorList>
    </citation>
    <scope>NUCLEOTIDE SEQUENCE [LARGE SCALE GENOMIC DNA]</scope>
    <source>
        <strain>ATCC 29342 / M129 / Subtype 1</strain>
    </source>
</reference>
<reference key="2">
    <citation type="journal article" date="2003" name="Nucleic Acids Res.">
        <title>A nomenclature for restriction enzymes, DNA methyltransferases, homing endonucleases and their genes.</title>
        <authorList>
            <person name="Roberts R.J."/>
            <person name="Belfort M."/>
            <person name="Bestor T."/>
            <person name="Bhagwat A.S."/>
            <person name="Bickle T.A."/>
            <person name="Bitinaite J."/>
            <person name="Blumenthal R.M."/>
            <person name="Degtyarev S.K."/>
            <person name="Dryden D.T."/>
            <person name="Dybvig K."/>
            <person name="Firman K."/>
            <person name="Gromova E.S."/>
            <person name="Gumport R.I."/>
            <person name="Halford S.E."/>
            <person name="Hattman S."/>
            <person name="Heitman J."/>
            <person name="Hornby D.P."/>
            <person name="Janulaitis A."/>
            <person name="Jeltsch A."/>
            <person name="Josephsen J."/>
            <person name="Kiss A."/>
            <person name="Klaenhammer T.R."/>
            <person name="Kobayashi I."/>
            <person name="Kong H."/>
            <person name="Krueger D.H."/>
            <person name="Lacks S."/>
            <person name="Marinus M.G."/>
            <person name="Miyahara M."/>
            <person name="Morgan R.D."/>
            <person name="Murray N.E."/>
            <person name="Nagaraja V."/>
            <person name="Piekarowicz A."/>
            <person name="Pingoud A."/>
            <person name="Raleigh E."/>
            <person name="Rao D.N."/>
            <person name="Reich N."/>
            <person name="Repin V.E."/>
            <person name="Selker E.U."/>
            <person name="Shaw P.C."/>
            <person name="Stein D.C."/>
            <person name="Stoddard B.L."/>
            <person name="Szybalski W."/>
            <person name="Trautner T.A."/>
            <person name="Van Etten J.L."/>
            <person name="Vitor J.M."/>
            <person name="Wilson G.G."/>
            <person name="Xu S.Y."/>
        </authorList>
    </citation>
    <scope>NOMENCLATURE</scope>
</reference>
<reference key="3">
    <citation type="journal article" date="2013" name="PLoS Genet.">
        <title>Comprehensive methylome characterization of Mycoplasma genitalium and Mycoplasma pneumoniae at single-base resolution.</title>
        <authorList>
            <person name="Lluch-Senar M."/>
            <person name="Luong K."/>
            <person name="Llorens-Rico V."/>
            <person name="Delgado J."/>
            <person name="Fang G."/>
            <person name="Spittle K."/>
            <person name="Clark T.A."/>
            <person name="Schadt E."/>
            <person name="Turner S.W."/>
            <person name="Korlach J."/>
            <person name="Serrano L."/>
        </authorList>
    </citation>
    <scope>DISCUSSION OF SEQUENCE</scope>
    <source>
        <strain>ATCC 29342 / M129 / Subtype 1</strain>
    </source>
</reference>
<comment type="function">
    <text evidence="1 4">The N-terminal section of a putative type I restriction enzyme that if reconstituted might recognize 5'-GAN(7)TAY-3' and cleave a random distance away (Probable). Subunit R is required for both nuclease and ATPase activities, but not for modification (PubMed:12654995).</text>
</comment>
<comment type="caution">
    <text evidence="3 4">Could be the product of a pseudogene; in this organism the endonuclease subunit carries 2 frameshift mutations (resulting in 3 short ORFs) and is probably not expressed.</text>
</comment>
<gene>
    <name type="ordered locus">MPN_347</name>
    <name type="ORF">H91_orf376</name>
    <name type="ORF">MP489</name>
</gene>
<protein>
    <recommendedName>
        <fullName evidence="1 2">Putative type I restriction enzyme MpnIIP endonuclease subunit N-terminal part</fullName>
        <shortName>R protein N-terminal part</shortName>
    </recommendedName>
    <alternativeName>
        <fullName>Putative type I restriction enzyme MpnORFDP endonuclease subunit part 1</fullName>
        <shortName>MpnORFDAP</shortName>
    </alternativeName>
</protein>